<protein>
    <recommendedName>
        <fullName evidence="1">Small ribosomal subunit protein uS9</fullName>
    </recommendedName>
    <alternativeName>
        <fullName evidence="2">30S ribosomal protein S9</fullName>
    </alternativeName>
</protein>
<reference key="1">
    <citation type="journal article" date="2011" name="J. Bacteriol.">
        <title>Complete genome sequence of the Thermophilic Bacterium Exiguobacterium sp. AT1b.</title>
        <authorList>
            <person name="Vishnivetskaya T.A."/>
            <person name="Lucas S."/>
            <person name="Copeland A."/>
            <person name="Lapidus A."/>
            <person name="Glavina del Rio T."/>
            <person name="Dalin E."/>
            <person name="Tice H."/>
            <person name="Bruce D.C."/>
            <person name="Goodwin L.A."/>
            <person name="Pitluck S."/>
            <person name="Saunders E."/>
            <person name="Brettin T."/>
            <person name="Detter C."/>
            <person name="Han C."/>
            <person name="Larimer F."/>
            <person name="Land M.L."/>
            <person name="Hauser L.J."/>
            <person name="Kyrpides N.C."/>
            <person name="Ovchinnikova G."/>
            <person name="Kathariou S."/>
            <person name="Ramaley R.F."/>
            <person name="Rodrigues D.F."/>
            <person name="Hendrix C."/>
            <person name="Richardson P."/>
            <person name="Tiedje J.M."/>
        </authorList>
    </citation>
    <scope>NUCLEOTIDE SEQUENCE [LARGE SCALE GENOMIC DNA]</scope>
    <source>
        <strain>ATCC BAA-1283 / AT1b</strain>
    </source>
</reference>
<keyword id="KW-0687">Ribonucleoprotein</keyword>
<keyword id="KW-0689">Ribosomal protein</keyword>
<accession>C4KZL2</accession>
<feature type="chain" id="PRO_1000211834" description="Small ribosomal subunit protein uS9">
    <location>
        <begin position="1"/>
        <end position="130"/>
    </location>
</feature>
<gene>
    <name evidence="1" type="primary">rpsI</name>
    <name type="ordered locus">EAT1b_1599</name>
</gene>
<name>RS9_EXISA</name>
<evidence type="ECO:0000255" key="1">
    <source>
        <dbReference type="HAMAP-Rule" id="MF_00532"/>
    </source>
</evidence>
<evidence type="ECO:0000305" key="2"/>
<organism>
    <name type="scientific">Exiguobacterium sp. (strain ATCC BAA-1283 / AT1b)</name>
    <dbReference type="NCBI Taxonomy" id="360911"/>
    <lineage>
        <taxon>Bacteria</taxon>
        <taxon>Bacillati</taxon>
        <taxon>Bacillota</taxon>
        <taxon>Bacilli</taxon>
        <taxon>Bacillales</taxon>
        <taxon>Bacillales Family XII. Incertae Sedis</taxon>
        <taxon>Exiguobacterium</taxon>
    </lineage>
</organism>
<dbReference type="EMBL" id="CP001615">
    <property type="protein sequence ID" value="ACQ70525.1"/>
    <property type="molecule type" value="Genomic_DNA"/>
</dbReference>
<dbReference type="RefSeq" id="WP_012727644.1">
    <property type="nucleotide sequence ID" value="NZ_MOEL01000001.1"/>
</dbReference>
<dbReference type="SMR" id="C4KZL2"/>
<dbReference type="STRING" id="360911.EAT1b_1599"/>
<dbReference type="GeneID" id="94370777"/>
<dbReference type="KEGG" id="eat:EAT1b_1599"/>
<dbReference type="eggNOG" id="COG0103">
    <property type="taxonomic scope" value="Bacteria"/>
</dbReference>
<dbReference type="HOGENOM" id="CLU_046483_2_1_9"/>
<dbReference type="OrthoDB" id="9803965at2"/>
<dbReference type="Proteomes" id="UP000000716">
    <property type="component" value="Chromosome"/>
</dbReference>
<dbReference type="GO" id="GO:0022627">
    <property type="term" value="C:cytosolic small ribosomal subunit"/>
    <property type="evidence" value="ECO:0007669"/>
    <property type="project" value="TreeGrafter"/>
</dbReference>
<dbReference type="GO" id="GO:0003723">
    <property type="term" value="F:RNA binding"/>
    <property type="evidence" value="ECO:0007669"/>
    <property type="project" value="TreeGrafter"/>
</dbReference>
<dbReference type="GO" id="GO:0003735">
    <property type="term" value="F:structural constituent of ribosome"/>
    <property type="evidence" value="ECO:0007669"/>
    <property type="project" value="InterPro"/>
</dbReference>
<dbReference type="GO" id="GO:0006412">
    <property type="term" value="P:translation"/>
    <property type="evidence" value="ECO:0007669"/>
    <property type="project" value="UniProtKB-UniRule"/>
</dbReference>
<dbReference type="FunFam" id="3.30.230.10:FF:000001">
    <property type="entry name" value="30S ribosomal protein S9"/>
    <property type="match status" value="1"/>
</dbReference>
<dbReference type="Gene3D" id="3.30.230.10">
    <property type="match status" value="1"/>
</dbReference>
<dbReference type="HAMAP" id="MF_00532_B">
    <property type="entry name" value="Ribosomal_uS9_B"/>
    <property type="match status" value="1"/>
</dbReference>
<dbReference type="InterPro" id="IPR020568">
    <property type="entry name" value="Ribosomal_Su5_D2-typ_SF"/>
</dbReference>
<dbReference type="InterPro" id="IPR000754">
    <property type="entry name" value="Ribosomal_uS9"/>
</dbReference>
<dbReference type="InterPro" id="IPR023035">
    <property type="entry name" value="Ribosomal_uS9_bac/plastid"/>
</dbReference>
<dbReference type="InterPro" id="IPR020574">
    <property type="entry name" value="Ribosomal_uS9_CS"/>
</dbReference>
<dbReference type="InterPro" id="IPR014721">
    <property type="entry name" value="Ribsml_uS5_D2-typ_fold_subgr"/>
</dbReference>
<dbReference type="NCBIfam" id="NF001099">
    <property type="entry name" value="PRK00132.1"/>
    <property type="match status" value="1"/>
</dbReference>
<dbReference type="PANTHER" id="PTHR21569">
    <property type="entry name" value="RIBOSOMAL PROTEIN S9"/>
    <property type="match status" value="1"/>
</dbReference>
<dbReference type="PANTHER" id="PTHR21569:SF1">
    <property type="entry name" value="SMALL RIBOSOMAL SUBUNIT PROTEIN US9M"/>
    <property type="match status" value="1"/>
</dbReference>
<dbReference type="Pfam" id="PF00380">
    <property type="entry name" value="Ribosomal_S9"/>
    <property type="match status" value="1"/>
</dbReference>
<dbReference type="SUPFAM" id="SSF54211">
    <property type="entry name" value="Ribosomal protein S5 domain 2-like"/>
    <property type="match status" value="1"/>
</dbReference>
<dbReference type="PROSITE" id="PS00360">
    <property type="entry name" value="RIBOSOMAL_S9"/>
    <property type="match status" value="1"/>
</dbReference>
<comment type="similarity">
    <text evidence="1">Belongs to the universal ribosomal protein uS9 family.</text>
</comment>
<sequence length="130" mass="14464">MADVRYYGTGRRKHSVARVHLVAGDGKVVVNGRDISEYFGHETLIMMAKSPLVLTETEGKYDVIVNVNGGGYTGQAGAIRHGVSRALLQADPEFRPSLKEKGFLTRDARMKERKKYGLKAARRAPQFSKR</sequence>
<proteinExistence type="inferred from homology"/>